<organism>
    <name type="scientific">Methylibium petroleiphilum (strain ATCC BAA-1232 / LMG 22953 / PM1)</name>
    <dbReference type="NCBI Taxonomy" id="420662"/>
    <lineage>
        <taxon>Bacteria</taxon>
        <taxon>Pseudomonadati</taxon>
        <taxon>Pseudomonadota</taxon>
        <taxon>Betaproteobacteria</taxon>
        <taxon>Burkholderiales</taxon>
        <taxon>Sphaerotilaceae</taxon>
        <taxon>Methylibium</taxon>
    </lineage>
</organism>
<dbReference type="EC" id="2.7.8.7" evidence="1"/>
<dbReference type="EMBL" id="CP000555">
    <property type="protein sequence ID" value="ABM93616.1"/>
    <property type="molecule type" value="Genomic_DNA"/>
</dbReference>
<dbReference type="RefSeq" id="WP_011828254.1">
    <property type="nucleotide sequence ID" value="NC_008825.1"/>
</dbReference>
<dbReference type="SMR" id="A2SDH7"/>
<dbReference type="STRING" id="420662.Mpe_A0654"/>
<dbReference type="KEGG" id="mpt:Mpe_A0654"/>
<dbReference type="eggNOG" id="COG0736">
    <property type="taxonomic scope" value="Bacteria"/>
</dbReference>
<dbReference type="HOGENOM" id="CLU_089696_3_1_4"/>
<dbReference type="Proteomes" id="UP000000366">
    <property type="component" value="Chromosome"/>
</dbReference>
<dbReference type="GO" id="GO:0005737">
    <property type="term" value="C:cytoplasm"/>
    <property type="evidence" value="ECO:0007669"/>
    <property type="project" value="UniProtKB-SubCell"/>
</dbReference>
<dbReference type="GO" id="GO:0008897">
    <property type="term" value="F:holo-[acyl-carrier-protein] synthase activity"/>
    <property type="evidence" value="ECO:0007669"/>
    <property type="project" value="UniProtKB-UniRule"/>
</dbReference>
<dbReference type="GO" id="GO:0000287">
    <property type="term" value="F:magnesium ion binding"/>
    <property type="evidence" value="ECO:0007669"/>
    <property type="project" value="UniProtKB-UniRule"/>
</dbReference>
<dbReference type="GO" id="GO:0006633">
    <property type="term" value="P:fatty acid biosynthetic process"/>
    <property type="evidence" value="ECO:0007669"/>
    <property type="project" value="UniProtKB-UniRule"/>
</dbReference>
<dbReference type="Gene3D" id="3.90.470.20">
    <property type="entry name" value="4'-phosphopantetheinyl transferase domain"/>
    <property type="match status" value="1"/>
</dbReference>
<dbReference type="HAMAP" id="MF_00101">
    <property type="entry name" value="AcpS"/>
    <property type="match status" value="1"/>
</dbReference>
<dbReference type="InterPro" id="IPR008278">
    <property type="entry name" value="4-PPantetheinyl_Trfase_dom"/>
</dbReference>
<dbReference type="InterPro" id="IPR037143">
    <property type="entry name" value="4-PPantetheinyl_Trfase_dom_sf"/>
</dbReference>
<dbReference type="InterPro" id="IPR002582">
    <property type="entry name" value="ACPS"/>
</dbReference>
<dbReference type="InterPro" id="IPR004568">
    <property type="entry name" value="Ppantetheine-prot_Trfase_dom"/>
</dbReference>
<dbReference type="NCBIfam" id="TIGR00516">
    <property type="entry name" value="acpS"/>
    <property type="match status" value="1"/>
</dbReference>
<dbReference type="NCBIfam" id="TIGR00556">
    <property type="entry name" value="pantethn_trn"/>
    <property type="match status" value="1"/>
</dbReference>
<dbReference type="Pfam" id="PF01648">
    <property type="entry name" value="ACPS"/>
    <property type="match status" value="1"/>
</dbReference>
<dbReference type="SUPFAM" id="SSF56214">
    <property type="entry name" value="4'-phosphopantetheinyl transferase"/>
    <property type="match status" value="1"/>
</dbReference>
<protein>
    <recommendedName>
        <fullName evidence="1">Holo-[acyl-carrier-protein] synthase</fullName>
        <shortName evidence="1">Holo-ACP synthase</shortName>
        <ecNumber evidence="1">2.7.8.7</ecNumber>
    </recommendedName>
    <alternativeName>
        <fullName evidence="1">4'-phosphopantetheinyl transferase AcpS</fullName>
    </alternativeName>
</protein>
<accession>A2SDH7</accession>
<keyword id="KW-0963">Cytoplasm</keyword>
<keyword id="KW-0275">Fatty acid biosynthesis</keyword>
<keyword id="KW-0276">Fatty acid metabolism</keyword>
<keyword id="KW-0444">Lipid biosynthesis</keyword>
<keyword id="KW-0443">Lipid metabolism</keyword>
<keyword id="KW-0460">Magnesium</keyword>
<keyword id="KW-0479">Metal-binding</keyword>
<keyword id="KW-1185">Reference proteome</keyword>
<keyword id="KW-0808">Transferase</keyword>
<sequence>MIFGIGTDICDIRRLRATYARRGERFAEKVLGPQELEVFRYRLAKVEARGLSYLATRFSAKEAFSKAIGTGMRTPMSWRACQILNARSGKPEIRLHGPLAAWFEAQGLRAHVSVTDETDYAASFVVVETQET</sequence>
<gene>
    <name evidence="1" type="primary">acpS</name>
    <name type="ordered locus">Mpe_A0654</name>
</gene>
<proteinExistence type="inferred from homology"/>
<comment type="function">
    <text evidence="1">Transfers the 4'-phosphopantetheine moiety from coenzyme A to a Ser of acyl-carrier-protein.</text>
</comment>
<comment type="catalytic activity">
    <reaction evidence="1">
        <text>apo-[ACP] + CoA = holo-[ACP] + adenosine 3',5'-bisphosphate + H(+)</text>
        <dbReference type="Rhea" id="RHEA:12068"/>
        <dbReference type="Rhea" id="RHEA-COMP:9685"/>
        <dbReference type="Rhea" id="RHEA-COMP:9690"/>
        <dbReference type="ChEBI" id="CHEBI:15378"/>
        <dbReference type="ChEBI" id="CHEBI:29999"/>
        <dbReference type="ChEBI" id="CHEBI:57287"/>
        <dbReference type="ChEBI" id="CHEBI:58343"/>
        <dbReference type="ChEBI" id="CHEBI:64479"/>
        <dbReference type="EC" id="2.7.8.7"/>
    </reaction>
</comment>
<comment type="cofactor">
    <cofactor evidence="1">
        <name>Mg(2+)</name>
        <dbReference type="ChEBI" id="CHEBI:18420"/>
    </cofactor>
</comment>
<comment type="subcellular location">
    <subcellularLocation>
        <location evidence="1">Cytoplasm</location>
    </subcellularLocation>
</comment>
<comment type="similarity">
    <text evidence="1">Belongs to the P-Pant transferase superfamily. AcpS family.</text>
</comment>
<evidence type="ECO:0000255" key="1">
    <source>
        <dbReference type="HAMAP-Rule" id="MF_00101"/>
    </source>
</evidence>
<feature type="chain" id="PRO_1000075645" description="Holo-[acyl-carrier-protein] synthase">
    <location>
        <begin position="1"/>
        <end position="132"/>
    </location>
</feature>
<feature type="binding site" evidence="1">
    <location>
        <position position="8"/>
    </location>
    <ligand>
        <name>Mg(2+)</name>
        <dbReference type="ChEBI" id="CHEBI:18420"/>
    </ligand>
</feature>
<feature type="binding site" evidence="1">
    <location>
        <position position="62"/>
    </location>
    <ligand>
        <name>Mg(2+)</name>
        <dbReference type="ChEBI" id="CHEBI:18420"/>
    </ligand>
</feature>
<name>ACPS_METPP</name>
<reference key="1">
    <citation type="journal article" date="2007" name="J. Bacteriol.">
        <title>Whole-genome analysis of the methyl tert-butyl ether-degrading beta-proteobacterium Methylibium petroleiphilum PM1.</title>
        <authorList>
            <person name="Kane S.R."/>
            <person name="Chakicherla A.Y."/>
            <person name="Chain P.S.G."/>
            <person name="Schmidt R."/>
            <person name="Shin M.W."/>
            <person name="Legler T.C."/>
            <person name="Scow K.M."/>
            <person name="Larimer F.W."/>
            <person name="Lucas S.M."/>
            <person name="Richardson P.M."/>
            <person name="Hristova K.R."/>
        </authorList>
    </citation>
    <scope>NUCLEOTIDE SEQUENCE [LARGE SCALE GENOMIC DNA]</scope>
    <source>
        <strain>ATCC BAA-1232 / LMG 22953 / PM1</strain>
    </source>
</reference>